<name>HTF2_CARMO</name>
<protein>
    <recommendedName>
        <fullName>Hypertrehalosaemic factor 2</fullName>
    </recommendedName>
    <alternativeName>
        <fullName>Hypertrehalosaemic factor II</fullName>
        <shortName>HRTH-II</shortName>
        <shortName>HTF-II</shortName>
    </alternativeName>
    <alternativeName>
        <fullName>Hypertrehalosaemic neuropeptide II</fullName>
    </alternativeName>
</protein>
<proteinExistence type="evidence at protein level"/>
<keyword id="KW-0027">Amidation</keyword>
<keyword id="KW-0903">Direct protein sequencing</keyword>
<keyword id="KW-0325">Glycoprotein</keyword>
<keyword id="KW-0372">Hormone</keyword>
<keyword id="KW-0527">Neuropeptide</keyword>
<keyword id="KW-0873">Pyrrolidone carboxylic acid</keyword>
<keyword id="KW-0964">Secreted</keyword>
<accession>P62542</accession>
<accession>P11385</accession>
<sequence length="10" mass="1164">QLTFTPNWGT</sequence>
<organism>
    <name type="scientific">Carausius morosus</name>
    <name type="common">Indian stick insect</name>
    <name type="synonym">Dixippus morosus</name>
    <dbReference type="NCBI Taxonomy" id="7022"/>
    <lineage>
        <taxon>Eukaryota</taxon>
        <taxon>Metazoa</taxon>
        <taxon>Ecdysozoa</taxon>
        <taxon>Arthropoda</taxon>
        <taxon>Hexapoda</taxon>
        <taxon>Insecta</taxon>
        <taxon>Pterygota</taxon>
        <taxon>Neoptera</taxon>
        <taxon>Polyneoptera</taxon>
        <taxon>Phasmatodea</taxon>
        <taxon>Verophasmatodea</taxon>
        <taxon>Anareolatae</taxon>
        <taxon>Lonchodidae</taxon>
        <taxon>Lonchodinae</taxon>
        <taxon>Carausius</taxon>
    </lineage>
</organism>
<comment type="function">
    <text>Hypertrehalosaemic factors are neuropeptides that elevate the level of trehalose in the hemolymph (trehalose is the major carbohydrate in the hemolymph of insects).</text>
</comment>
<comment type="subcellular location">
    <subcellularLocation>
        <location>Secreted</location>
    </subcellularLocation>
</comment>
<comment type="PTM">
    <text evidence="1 3">The glycosylated tryptophan appears to be identical to the C-linked mannose found in mammals, but lacks the typical W-X-X-W motif. The carbohydrate moiety is not necessary for hypertrehalosaemic activity.</text>
</comment>
<comment type="mass spectrometry" mass="1308.61" method="FAB" evidence="2"/>
<comment type="similarity">
    <text evidence="4">Belongs to the AKH/HRTH/RPCH family.</text>
</comment>
<evidence type="ECO:0000269" key="1">
    <source>
    </source>
</evidence>
<evidence type="ECO:0000269" key="2">
    <source>
    </source>
</evidence>
<evidence type="ECO:0000269" key="3">
    <source ref="3"/>
</evidence>
<evidence type="ECO:0000305" key="4"/>
<feature type="peptide" id="PRO_0000043429" description="Hypertrehalosaemic factor 2">
    <location>
        <begin position="1"/>
        <end position="10"/>
    </location>
</feature>
<feature type="modified residue" description="Pyrrolidone carboxylic acid" evidence="2">
    <location>
        <position position="1"/>
    </location>
</feature>
<feature type="modified residue" description="Threonine amide" evidence="1">
    <location>
        <position position="10"/>
    </location>
</feature>
<feature type="glycosylation site" description="C-linked (Man) tryptophan; atypical" evidence="1 3">
    <location>
        <position position="8"/>
    </location>
</feature>
<reference key="1">
    <citation type="journal article" date="1987" name="Biol. Chem. Hoppe-Seyler">
        <title>Primary structure of the hypertrehalosaemic factor II from the corpus cardiacum of the Indian stick insect, Carausius morosus, determined by fast atom bombardment mass spectrometry.</title>
        <authorList>
            <person name="Gaede G."/>
            <person name="Rinehart K.L. Jr."/>
        </authorList>
    </citation>
    <scope>PROTEIN SEQUENCE</scope>
    <scope>PYROGLUTAMATE FORMATION AT GLN-1</scope>
    <scope>MASS SPECTROMETRY</scope>
    <source>
        <tissue>Corpora cardiaca</tissue>
    </source>
</reference>
<reference key="2">
    <citation type="journal article" date="1992" name="Biochem. Biophys. Res. Commun.">
        <title>A tryptophan-substituted member of the AKH/RPCH family isolated from a stick insect corpus cardiacum.</title>
        <authorList>
            <person name="Gaede G."/>
            <person name="Kellner R."/>
            <person name="Rinehart K.L. Jr."/>
            <person name="Proefke M.L."/>
        </authorList>
    </citation>
    <scope>GLYCOSYLATION AT TRP-8</scope>
    <scope>AMIDATION AT THR-10</scope>
    <source>
        <tissue>Corpora cardiaca</tissue>
    </source>
</reference>
<reference key="3">
    <citation type="journal article" date="1998" name="Ann. N. Y. Acad. Sci.">
        <title>The adipokinetic hormone/red pigment-concentrating hormone family: new structures, unique post-translational modifications and a new physiological role.</title>
        <authorList>
            <person name="Gaede G."/>
        </authorList>
    </citation>
    <scope>GLYCOSYLATION AT TRP-8</scope>
    <source>
        <tissue>Corpora cardiaca</tissue>
    </source>
</reference>
<dbReference type="PIR" id="JC1416">
    <property type="entry name" value="JC1416"/>
</dbReference>
<dbReference type="iPTMnet" id="P62542"/>
<dbReference type="GO" id="GO:0005576">
    <property type="term" value="C:extracellular region"/>
    <property type="evidence" value="ECO:0007669"/>
    <property type="project" value="UniProtKB-SubCell"/>
</dbReference>
<dbReference type="GO" id="GO:0005179">
    <property type="term" value="F:hormone activity"/>
    <property type="evidence" value="ECO:0007669"/>
    <property type="project" value="UniProtKB-KW"/>
</dbReference>
<dbReference type="GO" id="GO:0007218">
    <property type="term" value="P:neuropeptide signaling pathway"/>
    <property type="evidence" value="ECO:0007669"/>
    <property type="project" value="UniProtKB-KW"/>
</dbReference>
<dbReference type="InterPro" id="IPR002047">
    <property type="entry name" value="Adipokinetic_hormone_CS"/>
</dbReference>
<dbReference type="PROSITE" id="PS00256">
    <property type="entry name" value="AKH"/>
    <property type="match status" value="1"/>
</dbReference>